<comment type="function">
    <text evidence="1 4">Reduces a broad range of aliphatic and aromatic aldehydes to the corresponding alcohols. Reduces prostaglandins (PubMed:19010934). May play a role in the metabolism of xenobiotic aromatic aldehydes (By similarity).</text>
</comment>
<comment type="catalytic activity">
    <reaction evidence="2">
        <text>an alditol + NADP(+) = an aldose + NADPH + H(+)</text>
        <dbReference type="Rhea" id="RHEA:12789"/>
        <dbReference type="Rhea" id="RHEA-COMP:9554"/>
        <dbReference type="Rhea" id="RHEA-COMP:9555"/>
        <dbReference type="ChEBI" id="CHEBI:15378"/>
        <dbReference type="ChEBI" id="CHEBI:15693"/>
        <dbReference type="ChEBI" id="CHEBI:17522"/>
        <dbReference type="ChEBI" id="CHEBI:57783"/>
        <dbReference type="ChEBI" id="CHEBI:58349"/>
        <dbReference type="EC" id="1.1.1.21"/>
    </reaction>
</comment>
<comment type="catalytic activity">
    <reaction evidence="4">
        <text>prostaglandin F2alpha + NADP(+) = prostaglandin H2 + NADPH + H(+)</text>
        <dbReference type="Rhea" id="RHEA:45312"/>
        <dbReference type="ChEBI" id="CHEBI:15378"/>
        <dbReference type="ChEBI" id="CHEBI:57404"/>
        <dbReference type="ChEBI" id="CHEBI:57405"/>
        <dbReference type="ChEBI" id="CHEBI:57783"/>
        <dbReference type="ChEBI" id="CHEBI:58349"/>
    </reaction>
</comment>
<comment type="biophysicochemical properties">
    <kinetics>
        <KM evidence="4">3.8 uM for prostaglandin H2</KM>
    </kinetics>
</comment>
<comment type="subunit">
    <text evidence="1">Monomer.</text>
</comment>
<comment type="subcellular location">
    <subcellularLocation>
        <location evidence="1">Cytoplasm</location>
    </subcellularLocation>
</comment>
<comment type="tissue specificity">
    <text evidence="3">Expressed exclusively in the epithelial cells of the deferent duct.</text>
</comment>
<comment type="induction">
    <text evidence="5">Castration resulted in a marked decrease in the level of the mRNA coding for the protein, whereas administration of testosterone to castrated males resulted in a marked increase.</text>
</comment>
<comment type="similarity">
    <text evidence="7">Belongs to the aldo/keto reductase family.</text>
</comment>
<keyword id="KW-0963">Cytoplasm</keyword>
<keyword id="KW-0521">NADP</keyword>
<keyword id="KW-0560">Oxidoreductase</keyword>
<keyword id="KW-1185">Reference proteome</keyword>
<evidence type="ECO:0000250" key="1"/>
<evidence type="ECO:0000250" key="2">
    <source>
        <dbReference type="UniProtKB" id="Q5RJP0"/>
    </source>
</evidence>
<evidence type="ECO:0000269" key="3">
    <source>
    </source>
</evidence>
<evidence type="ECO:0000269" key="4">
    <source>
    </source>
</evidence>
<evidence type="ECO:0000269" key="5">
    <source>
    </source>
</evidence>
<evidence type="ECO:0000303" key="6">
    <source>
    </source>
</evidence>
<evidence type="ECO:0000305" key="7"/>
<gene>
    <name type="primary">Akr1b7</name>
    <name type="synonym">Avdp</name>
</gene>
<name>ALD1_MOUSE</name>
<protein>
    <recommendedName>
        <fullName>Aldo-keto reductase family 1 member B7</fullName>
        <ecNumber evidence="2">1.1.1.21</ecNumber>
    </recommendedName>
    <alternativeName>
        <fullName>Aldehyde reductase</fullName>
        <shortName>AR</shortName>
    </alternativeName>
    <alternativeName>
        <fullName evidence="6">Aldose reductase-related protein 1</fullName>
    </alternativeName>
    <alternativeName>
        <fullName evidence="6">MVDP</fullName>
    </alternativeName>
    <alternativeName>
        <fullName>Vas deferens androgen-dependent protein</fullName>
    </alternativeName>
</protein>
<dbReference type="EC" id="1.1.1.21" evidence="2"/>
<dbReference type="EMBL" id="M81448">
    <property type="protein sequence ID" value="AAA39774.1"/>
    <property type="molecule type" value="Genomic_DNA"/>
</dbReference>
<dbReference type="EMBL" id="J05663">
    <property type="protein sequence ID" value="AAA39773.1"/>
    <property type="molecule type" value="mRNA"/>
</dbReference>
<dbReference type="CCDS" id="CCDS19993.1"/>
<dbReference type="PIR" id="A37990">
    <property type="entry name" value="A37990"/>
</dbReference>
<dbReference type="RefSeq" id="NP_033861.2">
    <property type="nucleotide sequence ID" value="NM_009731.2"/>
</dbReference>
<dbReference type="SMR" id="P21300"/>
<dbReference type="FunCoup" id="P21300">
    <property type="interactions" value="501"/>
</dbReference>
<dbReference type="STRING" id="10090.ENSMUSP00000007449"/>
<dbReference type="SwissLipids" id="SLP:000001114"/>
<dbReference type="iPTMnet" id="P21300"/>
<dbReference type="PhosphoSitePlus" id="P21300"/>
<dbReference type="SwissPalm" id="P21300"/>
<dbReference type="REPRODUCTION-2DPAGE" id="P21300"/>
<dbReference type="jPOST" id="P21300"/>
<dbReference type="PaxDb" id="10090-ENSMUSP00000007449"/>
<dbReference type="PeptideAtlas" id="P21300"/>
<dbReference type="ProteomicsDB" id="281965"/>
<dbReference type="Pumba" id="P21300"/>
<dbReference type="DNASU" id="11997"/>
<dbReference type="Ensembl" id="ENSMUST00000007449.9">
    <property type="protein sequence ID" value="ENSMUSP00000007449.8"/>
    <property type="gene ID" value="ENSMUSG00000052131.8"/>
</dbReference>
<dbReference type="GeneID" id="11997"/>
<dbReference type="KEGG" id="mmu:11997"/>
<dbReference type="UCSC" id="uc009bhd.2">
    <property type="organism name" value="mouse"/>
</dbReference>
<dbReference type="AGR" id="MGI:101918"/>
<dbReference type="CTD" id="11997"/>
<dbReference type="MGI" id="MGI:101918">
    <property type="gene designation" value="Akr1b7"/>
</dbReference>
<dbReference type="VEuPathDB" id="HostDB:ENSMUSG00000052131"/>
<dbReference type="eggNOG" id="KOG1577">
    <property type="taxonomic scope" value="Eukaryota"/>
</dbReference>
<dbReference type="GeneTree" id="ENSGT00940000154773"/>
<dbReference type="HOGENOM" id="CLU_023205_0_0_1"/>
<dbReference type="InParanoid" id="P21300"/>
<dbReference type="OMA" id="HWPMAYQ"/>
<dbReference type="OrthoDB" id="416253at2759"/>
<dbReference type="PhylomeDB" id="P21300"/>
<dbReference type="TreeFam" id="TF106492"/>
<dbReference type="Reactome" id="R-MMU-193144">
    <property type="pathway name" value="Estrogen biosynthesis"/>
</dbReference>
<dbReference type="SABIO-RK" id="P21300"/>
<dbReference type="BioGRID-ORCS" id="11997">
    <property type="hits" value="1 hit in 80 CRISPR screens"/>
</dbReference>
<dbReference type="ChiTaRS" id="Akr1b7">
    <property type="organism name" value="mouse"/>
</dbReference>
<dbReference type="PRO" id="PR:P21300"/>
<dbReference type="Proteomes" id="UP000000589">
    <property type="component" value="Chromosome 6"/>
</dbReference>
<dbReference type="RNAct" id="P21300">
    <property type="molecule type" value="protein"/>
</dbReference>
<dbReference type="Bgee" id="ENSMUSG00000052131">
    <property type="expression patterns" value="Expressed in adrenal gland and 84 other cell types or tissues"/>
</dbReference>
<dbReference type="ExpressionAtlas" id="P21300">
    <property type="expression patterns" value="baseline and differential"/>
</dbReference>
<dbReference type="GO" id="GO:0005739">
    <property type="term" value="C:mitochondrion"/>
    <property type="evidence" value="ECO:0007005"/>
    <property type="project" value="MGI"/>
</dbReference>
<dbReference type="GO" id="GO:0004032">
    <property type="term" value="F:aldose reductase (NADPH) activity"/>
    <property type="evidence" value="ECO:0007669"/>
    <property type="project" value="RHEA"/>
</dbReference>
<dbReference type="GO" id="GO:0036130">
    <property type="term" value="F:prostaglandin H2 endoperoxidase reductase activity"/>
    <property type="evidence" value="ECO:0007669"/>
    <property type="project" value="RHEA"/>
</dbReference>
<dbReference type="GO" id="GO:0006629">
    <property type="term" value="P:lipid metabolic process"/>
    <property type="evidence" value="ECO:0000304"/>
    <property type="project" value="MGI"/>
</dbReference>
<dbReference type="CDD" id="cd19107">
    <property type="entry name" value="AKR_AKR1B1-19"/>
    <property type="match status" value="1"/>
</dbReference>
<dbReference type="FunFam" id="3.20.20.100:FF:000068">
    <property type="entry name" value="Aldo-keto reductase family 1 member B10"/>
    <property type="match status" value="1"/>
</dbReference>
<dbReference type="Gene3D" id="3.20.20.100">
    <property type="entry name" value="NADP-dependent oxidoreductase domain"/>
    <property type="match status" value="1"/>
</dbReference>
<dbReference type="InterPro" id="IPR020471">
    <property type="entry name" value="AKR"/>
</dbReference>
<dbReference type="InterPro" id="IPR018170">
    <property type="entry name" value="Aldo/ket_reductase_CS"/>
</dbReference>
<dbReference type="InterPro" id="IPR023210">
    <property type="entry name" value="NADP_OxRdtase_dom"/>
</dbReference>
<dbReference type="InterPro" id="IPR036812">
    <property type="entry name" value="NADP_OxRdtase_dom_sf"/>
</dbReference>
<dbReference type="PANTHER" id="PTHR11732">
    <property type="entry name" value="ALDO/KETO REDUCTASE"/>
    <property type="match status" value="1"/>
</dbReference>
<dbReference type="Pfam" id="PF00248">
    <property type="entry name" value="Aldo_ket_red"/>
    <property type="match status" value="1"/>
</dbReference>
<dbReference type="PIRSF" id="PIRSF000097">
    <property type="entry name" value="AKR"/>
    <property type="match status" value="1"/>
</dbReference>
<dbReference type="PRINTS" id="PR00069">
    <property type="entry name" value="ALDKETRDTASE"/>
</dbReference>
<dbReference type="SUPFAM" id="SSF51430">
    <property type="entry name" value="NAD(P)-linked oxidoreductase"/>
    <property type="match status" value="1"/>
</dbReference>
<dbReference type="PROSITE" id="PS00798">
    <property type="entry name" value="ALDOKETO_REDUCTASE_1"/>
    <property type="match status" value="1"/>
</dbReference>
<dbReference type="PROSITE" id="PS00062">
    <property type="entry name" value="ALDOKETO_REDUCTASE_2"/>
    <property type="match status" value="1"/>
</dbReference>
<dbReference type="PROSITE" id="PS00063">
    <property type="entry name" value="ALDOKETO_REDUCTASE_3"/>
    <property type="match status" value="1"/>
</dbReference>
<reference key="1">
    <citation type="journal article" date="1992" name="J. Steroid Biochem. Mol. Biol.">
        <title>The genomic organization and DNA sequence of the mouse vas deferens androgen regulated protein gene.</title>
        <authorList>
            <person name="Pailhoux E.A."/>
            <person name="Veyssiere G.M."/>
            <person name="Fabre S."/>
            <person name="Tournaire C."/>
            <person name="Jean C.G."/>
        </authorList>
    </citation>
    <scope>NUCLEOTIDE SEQUENCE [GENOMIC DNA]</scope>
    <scope>TISSUE SPECIFICITY</scope>
    <source>
        <tissue>Vas deferens</tissue>
    </source>
</reference>
<reference key="2">
    <citation type="journal article" date="1990" name="J. Biol. Chem.">
        <title>Androgen-dependent protein from mouse vas deferens. cDNA cloning and protein homology with the aldo-keto reductase superfamily.</title>
        <authorList>
            <person name="Pailhoux E.A."/>
            <person name="Martinez A."/>
            <person name="Veyssiere G.M."/>
            <person name="Jean C.G."/>
        </authorList>
    </citation>
    <scope>NUCLEOTIDE SEQUENCE [MRNA]</scope>
    <source>
        <strain>CD-1</strain>
        <tissue>Vas deferens</tissue>
    </source>
</reference>
<reference key="3">
    <citation type="journal article" date="2009" name="J. Biochem.">
        <title>Prostaglandin F2alpha synthase activities of aldo-keto reductase 1B1, 1B3 and 1B7.</title>
        <authorList>
            <person name="Kabututu Z."/>
            <person name="Manin M."/>
            <person name="Pointud J.C."/>
            <person name="Maruyama T."/>
            <person name="Nagata N."/>
            <person name="Lambert S."/>
            <person name="Lefrancois-Martinez A.M."/>
            <person name="Martinez A."/>
            <person name="Urade Y."/>
        </authorList>
    </citation>
    <scope>CATALYTIC ACTIVITY</scope>
    <scope>BIOPHYSICOCHEMICAL PROPERTIES</scope>
    <scope>FUNCTION</scope>
</reference>
<reference key="4">
    <citation type="journal article" date="2010" name="Cell">
        <title>A tissue-specific atlas of mouse protein phosphorylation and expression.</title>
        <authorList>
            <person name="Huttlin E.L."/>
            <person name="Jedrychowski M.P."/>
            <person name="Elias J.E."/>
            <person name="Goswami T."/>
            <person name="Rad R."/>
            <person name="Beausoleil S.A."/>
            <person name="Villen J."/>
            <person name="Haas W."/>
            <person name="Sowa M.E."/>
            <person name="Gygi S.P."/>
        </authorList>
    </citation>
    <scope>IDENTIFICATION BY MASS SPECTROMETRY [LARGE SCALE ANALYSIS]</scope>
    <source>
        <tissue>Kidney</tissue>
    </source>
</reference>
<organism>
    <name type="scientific">Mus musculus</name>
    <name type="common">Mouse</name>
    <dbReference type="NCBI Taxonomy" id="10090"/>
    <lineage>
        <taxon>Eukaryota</taxon>
        <taxon>Metazoa</taxon>
        <taxon>Chordata</taxon>
        <taxon>Craniata</taxon>
        <taxon>Vertebrata</taxon>
        <taxon>Euteleostomi</taxon>
        <taxon>Mammalia</taxon>
        <taxon>Eutheria</taxon>
        <taxon>Euarchontoglires</taxon>
        <taxon>Glires</taxon>
        <taxon>Rodentia</taxon>
        <taxon>Myomorpha</taxon>
        <taxon>Muroidea</taxon>
        <taxon>Muridae</taxon>
        <taxon>Murinae</taxon>
        <taxon>Mus</taxon>
        <taxon>Mus</taxon>
    </lineage>
</organism>
<sequence>MATFVELSTKAKMPLVGLGTWKSSPGQVKEAVKAAIDAGYRHIDCAYVYHNENEVGEAIQEKIKENAVKREDLFIVSKLWATFFEKSLVKKAFQNTLSDLKLDYLDLYLVHWPQGFQAGNALLPKDNKGKVLLSKSTFLDAWEAMEELVDQGLVKALGISNFNHFQIERLLNKPGLKHKPVTNQIESHPYLTQEKLIQYCQSKGIAVTAYSPLGSPDRPYAKPEDPVVMEIPKIKEIAAKHKKTVAQVLIRFHVQRNVVVIPKSVTPSRIQENLQVFDFQLSEEDMAAILSFNRNWRACDLLDARTEEDYPFHEEY</sequence>
<feature type="chain" id="PRO_0000124629" description="Aldo-keto reductase family 1 member B7">
    <location>
        <begin position="1"/>
        <end position="316"/>
    </location>
</feature>
<feature type="active site" description="Proton donor" evidence="1">
    <location>
        <position position="49"/>
    </location>
</feature>
<feature type="binding site" evidence="1">
    <location>
        <begin position="20"/>
        <end position="21"/>
    </location>
    <ligand>
        <name>NADP(+)</name>
        <dbReference type="ChEBI" id="CHEBI:58349"/>
    </ligand>
</feature>
<feature type="binding site" evidence="1">
    <location>
        <position position="44"/>
    </location>
    <ligand>
        <name>NADP(+)</name>
        <dbReference type="ChEBI" id="CHEBI:58349"/>
    </ligand>
</feature>
<feature type="binding site" evidence="1">
    <location>
        <position position="111"/>
    </location>
    <ligand>
        <name>substrate</name>
    </ligand>
</feature>
<feature type="binding site" evidence="1">
    <location>
        <begin position="160"/>
        <end position="161"/>
    </location>
    <ligand>
        <name>NADP(+)</name>
        <dbReference type="ChEBI" id="CHEBI:58349"/>
    </ligand>
</feature>
<feature type="binding site" evidence="1">
    <location>
        <position position="184"/>
    </location>
    <ligand>
        <name>NADP(+)</name>
        <dbReference type="ChEBI" id="CHEBI:58349"/>
    </ligand>
</feature>
<feature type="binding site" evidence="1">
    <location>
        <begin position="210"/>
        <end position="215"/>
    </location>
    <ligand>
        <name>NADP(+)</name>
        <dbReference type="ChEBI" id="CHEBI:58349"/>
    </ligand>
</feature>
<feature type="binding site" evidence="1">
    <location>
        <begin position="263"/>
        <end position="269"/>
    </location>
    <ligand>
        <name>NADP(+)</name>
        <dbReference type="ChEBI" id="CHEBI:58349"/>
    </ligand>
</feature>
<feature type="binding site" evidence="1">
    <location>
        <position position="273"/>
    </location>
    <ligand>
        <name>NADP(+)</name>
        <dbReference type="ChEBI" id="CHEBI:58349"/>
    </ligand>
</feature>
<feature type="site" description="Lowers pKa of active site Tyr" evidence="1">
    <location>
        <position position="78"/>
    </location>
</feature>
<feature type="sequence conflict" description="In Ref. 2; AAA39773." evidence="7" ref="2">
    <original>Q</original>
    <variation>D</variation>
    <location>
        <position position="94"/>
    </location>
</feature>
<proteinExistence type="evidence at protein level"/>
<accession>P21300</accession>